<accession>Q8N3U1</accession>
<proteinExistence type="evidence at transcript level"/>
<organism>
    <name type="scientific">Homo sapiens</name>
    <name type="common">Human</name>
    <dbReference type="NCBI Taxonomy" id="9606"/>
    <lineage>
        <taxon>Eukaryota</taxon>
        <taxon>Metazoa</taxon>
        <taxon>Chordata</taxon>
        <taxon>Craniata</taxon>
        <taxon>Vertebrata</taxon>
        <taxon>Euteleostomi</taxon>
        <taxon>Mammalia</taxon>
        <taxon>Eutheria</taxon>
        <taxon>Euarchontoglires</taxon>
        <taxon>Primates</taxon>
        <taxon>Haplorrhini</taxon>
        <taxon>Catarrhini</taxon>
        <taxon>Hominidae</taxon>
        <taxon>Homo</taxon>
    </lineage>
</organism>
<sequence length="123" mass="12695">MPDASLGSLGITWCFLESPLEVSSGRFGLARLLGSQDHGDDPAERGRTATDAWGPSRWGQSPGNGGGYCDASPPSALAPGDRAWALPASPSSGAPASQHCCLEKAGTRTKASPVWGRDGNTWN</sequence>
<reference key="1">
    <citation type="journal article" date="2007" name="BMC Genomics">
        <title>The full-ORF clone resource of the German cDNA consortium.</title>
        <authorList>
            <person name="Bechtel S."/>
            <person name="Rosenfelder H."/>
            <person name="Duda A."/>
            <person name="Schmidt C.P."/>
            <person name="Ernst U."/>
            <person name="Wellenreuther R."/>
            <person name="Mehrle A."/>
            <person name="Schuster C."/>
            <person name="Bahr A."/>
            <person name="Bloecker H."/>
            <person name="Heubner D."/>
            <person name="Hoerlein A."/>
            <person name="Michel G."/>
            <person name="Wedler H."/>
            <person name="Koehrer K."/>
            <person name="Ottenwaelder B."/>
            <person name="Poustka A."/>
            <person name="Wiemann S."/>
            <person name="Schupp I."/>
        </authorList>
    </citation>
    <scope>NUCLEOTIDE SEQUENCE [LARGE SCALE MRNA]</scope>
    <source>
        <tissue>Amygdala</tissue>
    </source>
</reference>
<name>YS014_HUMAN</name>
<protein>
    <recommendedName>
        <fullName>Putative uncharacterized protein LOC400692</fullName>
    </recommendedName>
</protein>
<keyword id="KW-1185">Reference proteome</keyword>
<evidence type="ECO:0000256" key="1">
    <source>
        <dbReference type="SAM" id="MobiDB-lite"/>
    </source>
</evidence>
<dbReference type="EMBL" id="AL831916">
    <property type="protein sequence ID" value="CAD38577.2"/>
    <property type="molecule type" value="mRNA"/>
</dbReference>
<dbReference type="BioMuta" id="-"/>
<dbReference type="DMDM" id="74714890"/>
<dbReference type="PeptideAtlas" id="Q8N3U1"/>
<dbReference type="neXtProt" id="NX_Q8N3U1"/>
<dbReference type="InParanoid" id="Q8N3U1"/>
<dbReference type="PAN-GO" id="Q8N3U1">
    <property type="GO annotations" value="0 GO annotations based on evolutionary models"/>
</dbReference>
<dbReference type="PhylomeDB" id="Q8N3U1"/>
<dbReference type="Pharos" id="Q8N3U1">
    <property type="development level" value="Tdark"/>
</dbReference>
<dbReference type="Proteomes" id="UP000005640">
    <property type="component" value="Unplaced"/>
</dbReference>
<dbReference type="RNAct" id="Q8N3U1">
    <property type="molecule type" value="protein"/>
</dbReference>
<feature type="chain" id="PRO_0000321572" description="Putative uncharacterized protein LOC400692">
    <location>
        <begin position="1"/>
        <end position="123"/>
    </location>
</feature>
<feature type="region of interest" description="Disordered" evidence="1">
    <location>
        <begin position="35"/>
        <end position="100"/>
    </location>
</feature>
<feature type="compositionally biased region" description="Basic and acidic residues" evidence="1">
    <location>
        <begin position="37"/>
        <end position="48"/>
    </location>
</feature>
<feature type="compositionally biased region" description="Low complexity" evidence="1">
    <location>
        <begin position="85"/>
        <end position="97"/>
    </location>
</feature>